<accession>P48582</accession>
<accession>D6W3T3</accession>
<accession>Q02823</accession>
<comment type="function">
    <text evidence="4 5 6 7 10 11">Class E VPS protein involved in concentration and sorting of cargo proteins of the multivesicular body (MVB) for incorporation into intralumenal vesicles. Fusion between endosomes and the vacuole will then target the cargo proteins to the vacuolar lumen. Acts as an adapter that recruits the DOA4 deubiquitinase to the endosomes, leading to deubiquitination of cargo proteins prior to the lumenal sequestration. Its association to the endosomes depends on SNF7 and its dissociation requires VPS4. Interacts functionally with the Pkc1p-mitogen-activated protein kinase pathway.</text>
</comment>
<comment type="subunit">
    <text evidence="9 10">Interacts with DOA4 and SNF7.</text>
</comment>
<comment type="interaction">
    <interactant intactId="EBI-3768">
        <id>P48582</id>
    </interactant>
    <interactant intactId="EBI-19840">
        <id>P32571</id>
        <label>DOA4</label>
    </interactant>
    <organismsDiffer>false</organismsDiffer>
    <experiments>15</experiments>
</comment>
<comment type="interaction">
    <interactant intactId="EBI-3768">
        <id>P48582</id>
    </interactant>
    <interactant intactId="EBI-2353109">
        <id>Q08003</id>
        <label>RFU1</label>
    </interactant>
    <organismsDiffer>false</organismsDiffer>
    <experiments>2</experiments>
</comment>
<comment type="interaction">
    <interactant intactId="EBI-3768">
        <id>P48582</id>
    </interactant>
    <interactant intactId="EBI-17554">
        <id>P39929</id>
        <label>SNF7</label>
    </interactant>
    <organismsDiffer>false</organismsDiffer>
    <experiments>4</experiments>
</comment>
<comment type="subcellular location">
    <subcellularLocation>
        <location>Cytoplasm</location>
    </subcellularLocation>
    <subcellularLocation>
        <location>Endosome</location>
    </subcellularLocation>
</comment>
<comment type="domain">
    <text>The coiled-coil domain is essential for MVB sorting.</text>
</comment>
<comment type="domain">
    <text>The BRO1 domain may be involved in the binding to SNF7.</text>
</comment>
<comment type="miscellaneous">
    <text evidence="8">Present with 10200 molecules/cell in log phase SD medium.</text>
</comment>
<keyword id="KW-0002">3D-structure</keyword>
<keyword id="KW-0175">Coiled coil</keyword>
<keyword id="KW-0963">Cytoplasm</keyword>
<keyword id="KW-0967">Endosome</keyword>
<keyword id="KW-0597">Phosphoprotein</keyword>
<keyword id="KW-0653">Protein transport</keyword>
<keyword id="KW-1185">Reference proteome</keyword>
<keyword id="KW-0813">Transport</keyword>
<sequence>MKPYLFDLKLKDTEKLDWKKGLSSYLKKSYGSSQWRTFYDEKATSELDHLRNNANGELAPSSLSEQNLKYYSFLEHLYFRLGSKGSRLKMDFTWYDAEYSSAQKGLKYTQHTLAFEKSCTLFNIAVIFTQIARENINEDYKNSIANLTKAFSCFEYLSENFLNSPSVDLQSENTRFLANICHAEAQELFVLKLLNDQISSKQYTLISKLSRATCNLFQKCHDFMKEIDDDVAIYGEPKWKTTVTCKLHFYKSLSAYYHGLHLEEENRVGEAIAFLDFSMQQLISSLPFKTWLVEFIDFDGFKETLEKKQKELIKDNDFIYHESVPAVVQVDSIKALDAIKSPTWEKILEPYMQDVANKCDSLYRGIIPLDVYEKESIYSEEKATLLRKQVEETETANLEYSSFIEFTNLPRLLSDLEKQFSDGNIFSNTDTQGQLMRDQIQTWCKFIQTNEFRDIEEQMNKIVFKRKQILEILSALPNDQKENVTKLKSSLVAASNSDEKLFACVKPHIVEINLLNDNGKIWKKFDEFNRNTPPQPSLLDIDDTKNDKILELLKQVKGHAEDLRTLKEERSRNLSELRDEINNDDITKLLIINKGKSDVELKDLFEVELEKFEPLSTRIEATIYKQSSMIDDIKAKLDEIFHLSNFKDKSSGEEKFLEDRKNFFDKLQEAVKSFSIFASDLPKGIEFYDSLFNMSRDLAERVRVAKQTEDSTANSPAPPLPPLDSKASVVGGPPLLPQKSAAFQSLSRQGLNLGDQFQNLKISAGSDLPQGPGIPPRTYEASPYAATPTMAAPPVPPKQSQEDMYDLRRRKAVENEERELQENPTSFYNRPSVFDENMYSKYSS</sequence>
<name>BRO1_YEAST</name>
<dbReference type="EMBL" id="U37364">
    <property type="protein sequence ID" value="AAB07790.1"/>
    <property type="molecule type" value="Genomic_DNA"/>
</dbReference>
<dbReference type="EMBL" id="U41849">
    <property type="protein sequence ID" value="AAB68255.1"/>
    <property type="molecule type" value="Genomic_DNA"/>
</dbReference>
<dbReference type="EMBL" id="BK006949">
    <property type="protein sequence ID" value="DAA11349.1"/>
    <property type="molecule type" value="Genomic_DNA"/>
</dbReference>
<dbReference type="PIR" id="S61104">
    <property type="entry name" value="S61104"/>
</dbReference>
<dbReference type="RefSeq" id="NP_015241.1">
    <property type="nucleotide sequence ID" value="NM_001183898.1"/>
</dbReference>
<dbReference type="PDB" id="1ZB1">
    <property type="method" value="X-ray"/>
    <property type="resolution" value="1.95 A"/>
    <property type="chains" value="A/B=1-387"/>
</dbReference>
<dbReference type="PDBsum" id="1ZB1"/>
<dbReference type="SMR" id="P48582"/>
<dbReference type="BioGRID" id="36097">
    <property type="interactions" value="320"/>
</dbReference>
<dbReference type="DIP" id="DIP-2225N"/>
<dbReference type="FunCoup" id="P48582">
    <property type="interactions" value="119"/>
</dbReference>
<dbReference type="IntAct" id="P48582">
    <property type="interactions" value="12"/>
</dbReference>
<dbReference type="MINT" id="P48582"/>
<dbReference type="STRING" id="4932.YPL084W"/>
<dbReference type="TCDB" id="3.A.31.1.1">
    <property type="family name" value="the endosomal sorting complexes required for transport iii (escrt-iii) family"/>
</dbReference>
<dbReference type="GlyGen" id="P48582">
    <property type="glycosylation" value="2 sites, 1 O-linked glycan (1 site)"/>
</dbReference>
<dbReference type="iPTMnet" id="P48582"/>
<dbReference type="PaxDb" id="4932-YPL084W"/>
<dbReference type="PeptideAtlas" id="P48582"/>
<dbReference type="EnsemblFungi" id="YPL084W_mRNA">
    <property type="protein sequence ID" value="YPL084W"/>
    <property type="gene ID" value="YPL084W"/>
</dbReference>
<dbReference type="GeneID" id="856021"/>
<dbReference type="KEGG" id="sce:YPL084W"/>
<dbReference type="AGR" id="SGD:S000006005"/>
<dbReference type="SGD" id="S000006005">
    <property type="gene designation" value="BRO1"/>
</dbReference>
<dbReference type="VEuPathDB" id="FungiDB:YPL084W"/>
<dbReference type="eggNOG" id="KOG2220">
    <property type="taxonomic scope" value="Eukaryota"/>
</dbReference>
<dbReference type="GeneTree" id="ENSGT00940000163083"/>
<dbReference type="HOGENOM" id="CLU_321635_0_0_1"/>
<dbReference type="InParanoid" id="P48582"/>
<dbReference type="OMA" id="YLKRSYG"/>
<dbReference type="OrthoDB" id="2141925at2759"/>
<dbReference type="BioCyc" id="YEAST:G3O-33990-MONOMER"/>
<dbReference type="BioGRID-ORCS" id="856021">
    <property type="hits" value="2 hits in 10 CRISPR screens"/>
</dbReference>
<dbReference type="EvolutionaryTrace" id="P48582"/>
<dbReference type="PRO" id="PR:P48582"/>
<dbReference type="Proteomes" id="UP000002311">
    <property type="component" value="Chromosome XVI"/>
</dbReference>
<dbReference type="RNAct" id="P48582">
    <property type="molecule type" value="protein"/>
</dbReference>
<dbReference type="GO" id="GO:0005737">
    <property type="term" value="C:cytoplasm"/>
    <property type="evidence" value="ECO:0000314"/>
    <property type="project" value="SGD"/>
</dbReference>
<dbReference type="GO" id="GO:0005829">
    <property type="term" value="C:cytosol"/>
    <property type="evidence" value="ECO:0007005"/>
    <property type="project" value="SGD"/>
</dbReference>
<dbReference type="GO" id="GO:0005768">
    <property type="term" value="C:endosome"/>
    <property type="evidence" value="ECO:0000314"/>
    <property type="project" value="SGD"/>
</dbReference>
<dbReference type="GO" id="GO:0010008">
    <property type="term" value="C:endosome membrane"/>
    <property type="evidence" value="ECO:0007669"/>
    <property type="project" value="GOC"/>
</dbReference>
<dbReference type="GO" id="GO:1903561">
    <property type="term" value="C:extracellular vesicle"/>
    <property type="evidence" value="ECO:0000314"/>
    <property type="project" value="SGD"/>
</dbReference>
<dbReference type="GO" id="GO:0035800">
    <property type="term" value="F:deubiquitinase activator activity"/>
    <property type="evidence" value="ECO:0000314"/>
    <property type="project" value="SGD"/>
</dbReference>
<dbReference type="GO" id="GO:1904669">
    <property type="term" value="P:ATP export"/>
    <property type="evidence" value="ECO:0000315"/>
    <property type="project" value="SGD"/>
</dbReference>
<dbReference type="GO" id="GO:0070676">
    <property type="term" value="P:intralumenal vesicle formation"/>
    <property type="evidence" value="ECO:0000315"/>
    <property type="project" value="SGD"/>
</dbReference>
<dbReference type="GO" id="GO:0032511">
    <property type="term" value="P:late endosome to vacuole transport via multivesicular body sorting pathway"/>
    <property type="evidence" value="ECO:0000315"/>
    <property type="project" value="SGD"/>
</dbReference>
<dbReference type="GO" id="GO:0072671">
    <property type="term" value="P:mitochondria-associated ubiquitin-dependent protein catabolic process"/>
    <property type="evidence" value="ECO:0000315"/>
    <property type="project" value="SGD"/>
</dbReference>
<dbReference type="GO" id="GO:1903003">
    <property type="term" value="P:positive regulation of protein deubiquitination"/>
    <property type="evidence" value="ECO:0000314"/>
    <property type="project" value="SGD"/>
</dbReference>
<dbReference type="GO" id="GO:0016579">
    <property type="term" value="P:protein deubiquitination"/>
    <property type="evidence" value="ECO:0000316"/>
    <property type="project" value="SGD"/>
</dbReference>
<dbReference type="GO" id="GO:0036010">
    <property type="term" value="P:protein localization to endosome"/>
    <property type="evidence" value="ECO:0000315"/>
    <property type="project" value="SGD"/>
</dbReference>
<dbReference type="GO" id="GO:0043328">
    <property type="term" value="P:protein transport to vacuole involved in ubiquitin-dependent protein catabolic process via the multivesicular body sorting pathway"/>
    <property type="evidence" value="ECO:0000315"/>
    <property type="project" value="SGD"/>
</dbReference>
<dbReference type="GO" id="GO:0006511">
    <property type="term" value="P:ubiquitin-dependent protein catabolic process"/>
    <property type="evidence" value="ECO:0000315"/>
    <property type="project" value="SGD"/>
</dbReference>
<dbReference type="GO" id="GO:0007034">
    <property type="term" value="P:vacuolar transport"/>
    <property type="evidence" value="ECO:0000315"/>
    <property type="project" value="SGD"/>
</dbReference>
<dbReference type="CDD" id="cd09242">
    <property type="entry name" value="BRO1_ScBro1_like"/>
    <property type="match status" value="1"/>
</dbReference>
<dbReference type="CDD" id="cd09237">
    <property type="entry name" value="V_ScBro1_like"/>
    <property type="match status" value="1"/>
</dbReference>
<dbReference type="Gene3D" id="1.20.120.560">
    <property type="entry name" value="alix/aip1 in complex with the ypdl late domain"/>
    <property type="match status" value="1"/>
</dbReference>
<dbReference type="Gene3D" id="1.20.140.50">
    <property type="entry name" value="alix/aip1 like domains"/>
    <property type="match status" value="1"/>
</dbReference>
<dbReference type="Gene3D" id="1.25.40.280">
    <property type="entry name" value="alix/aip1 like domains"/>
    <property type="match status" value="1"/>
</dbReference>
<dbReference type="InterPro" id="IPR025304">
    <property type="entry name" value="ALIX_V_dom"/>
</dbReference>
<dbReference type="InterPro" id="IPR004328">
    <property type="entry name" value="BRO1_dom"/>
</dbReference>
<dbReference type="InterPro" id="IPR038499">
    <property type="entry name" value="BRO1_sf"/>
</dbReference>
<dbReference type="PANTHER" id="PTHR23030">
    <property type="entry name" value="PCD6 INTERACTING PROTEIN-RELATED"/>
    <property type="match status" value="1"/>
</dbReference>
<dbReference type="PANTHER" id="PTHR23030:SF30">
    <property type="entry name" value="TYROSINE-PROTEIN PHOSPHATASE NON-RECEPTOR TYPE 23"/>
    <property type="match status" value="1"/>
</dbReference>
<dbReference type="Pfam" id="PF13949">
    <property type="entry name" value="ALIX_LYPXL_bnd"/>
    <property type="match status" value="1"/>
</dbReference>
<dbReference type="Pfam" id="PF03097">
    <property type="entry name" value="BRO1"/>
    <property type="match status" value="1"/>
</dbReference>
<dbReference type="SMART" id="SM01041">
    <property type="entry name" value="BRO1"/>
    <property type="match status" value="1"/>
</dbReference>
<dbReference type="PROSITE" id="PS51180">
    <property type="entry name" value="BRO1"/>
    <property type="match status" value="1"/>
</dbReference>
<evidence type="ECO:0000255" key="1"/>
<evidence type="ECO:0000255" key="2">
    <source>
        <dbReference type="PROSITE-ProRule" id="PRU00526"/>
    </source>
</evidence>
<evidence type="ECO:0000256" key="3">
    <source>
        <dbReference type="SAM" id="MobiDB-lite"/>
    </source>
</evidence>
<evidence type="ECO:0000269" key="4">
    <source>
    </source>
</evidence>
<evidence type="ECO:0000269" key="5">
    <source>
    </source>
</evidence>
<evidence type="ECO:0000269" key="6">
    <source>
    </source>
</evidence>
<evidence type="ECO:0000269" key="7">
    <source>
    </source>
</evidence>
<evidence type="ECO:0000269" key="8">
    <source>
    </source>
</evidence>
<evidence type="ECO:0000269" key="9">
    <source>
    </source>
</evidence>
<evidence type="ECO:0000269" key="10">
    <source>
    </source>
</evidence>
<evidence type="ECO:0000269" key="11">
    <source>
    </source>
</evidence>
<evidence type="ECO:0000305" key="12"/>
<evidence type="ECO:0007744" key="13">
    <source>
    </source>
</evidence>
<evidence type="ECO:0007829" key="14">
    <source>
        <dbReference type="PDB" id="1ZB1"/>
    </source>
</evidence>
<organism>
    <name type="scientific">Saccharomyces cerevisiae (strain ATCC 204508 / S288c)</name>
    <name type="common">Baker's yeast</name>
    <dbReference type="NCBI Taxonomy" id="559292"/>
    <lineage>
        <taxon>Eukaryota</taxon>
        <taxon>Fungi</taxon>
        <taxon>Dikarya</taxon>
        <taxon>Ascomycota</taxon>
        <taxon>Saccharomycotina</taxon>
        <taxon>Saccharomycetes</taxon>
        <taxon>Saccharomycetales</taxon>
        <taxon>Saccharomycetaceae</taxon>
        <taxon>Saccharomyces</taxon>
    </lineage>
</organism>
<reference key="1">
    <citation type="journal article" date="1996" name="Mol. Cell. Biol.">
        <title>BRO1, a novel gene that interacts with components of the Pkc1p-mitogen-activated protein kinase pathway in Saccharomyces cerevisiae.</title>
        <authorList>
            <person name="Nickas M.E."/>
            <person name="Yaffe M.P."/>
        </authorList>
    </citation>
    <scope>NUCLEOTIDE SEQUENCE [GENOMIC DNA]</scope>
    <scope>FUNCTION</scope>
</reference>
<reference key="2">
    <citation type="journal article" date="1997" name="Nature">
        <title>The nucleotide sequence of Saccharomyces cerevisiae chromosome XVI.</title>
        <authorList>
            <person name="Bussey H."/>
            <person name="Storms R.K."/>
            <person name="Ahmed A."/>
            <person name="Albermann K."/>
            <person name="Allen E."/>
            <person name="Ansorge W."/>
            <person name="Araujo R."/>
            <person name="Aparicio A."/>
            <person name="Barrell B.G."/>
            <person name="Badcock K."/>
            <person name="Benes V."/>
            <person name="Botstein D."/>
            <person name="Bowman S."/>
            <person name="Brueckner M."/>
            <person name="Carpenter J."/>
            <person name="Cherry J.M."/>
            <person name="Chung E."/>
            <person name="Churcher C.M."/>
            <person name="Coster F."/>
            <person name="Davis K."/>
            <person name="Davis R.W."/>
            <person name="Dietrich F.S."/>
            <person name="Delius H."/>
            <person name="DiPaolo T."/>
            <person name="Dubois E."/>
            <person name="Duesterhoeft A."/>
            <person name="Duncan M."/>
            <person name="Floeth M."/>
            <person name="Fortin N."/>
            <person name="Friesen J.D."/>
            <person name="Fritz C."/>
            <person name="Goffeau A."/>
            <person name="Hall J."/>
            <person name="Hebling U."/>
            <person name="Heumann K."/>
            <person name="Hilbert H."/>
            <person name="Hillier L.W."/>
            <person name="Hunicke-Smith S."/>
            <person name="Hyman R.W."/>
            <person name="Johnston M."/>
            <person name="Kalman S."/>
            <person name="Kleine K."/>
            <person name="Komp C."/>
            <person name="Kurdi O."/>
            <person name="Lashkari D."/>
            <person name="Lew H."/>
            <person name="Lin A."/>
            <person name="Lin D."/>
            <person name="Louis E.J."/>
            <person name="Marathe R."/>
            <person name="Messenguy F."/>
            <person name="Mewes H.-W."/>
            <person name="Mirtipati S."/>
            <person name="Moestl D."/>
            <person name="Mueller-Auer S."/>
            <person name="Namath A."/>
            <person name="Nentwich U."/>
            <person name="Oefner P."/>
            <person name="Pearson D."/>
            <person name="Petel F.X."/>
            <person name="Pohl T.M."/>
            <person name="Purnelle B."/>
            <person name="Rajandream M.A."/>
            <person name="Rechmann S."/>
            <person name="Rieger M."/>
            <person name="Riles L."/>
            <person name="Roberts D."/>
            <person name="Schaefer M."/>
            <person name="Scharfe M."/>
            <person name="Scherens B."/>
            <person name="Schramm S."/>
            <person name="Schroeder M."/>
            <person name="Sdicu A.-M."/>
            <person name="Tettelin H."/>
            <person name="Urrestarazu L.A."/>
            <person name="Ushinsky S."/>
            <person name="Vierendeels F."/>
            <person name="Vissers S."/>
            <person name="Voss H."/>
            <person name="Walsh S.V."/>
            <person name="Wambutt R."/>
            <person name="Wang Y."/>
            <person name="Wedler E."/>
            <person name="Wedler H."/>
            <person name="Winnett E."/>
            <person name="Zhong W.-W."/>
            <person name="Zollner A."/>
            <person name="Vo D.H."/>
            <person name="Hani J."/>
        </authorList>
    </citation>
    <scope>NUCLEOTIDE SEQUENCE [LARGE SCALE GENOMIC DNA]</scope>
    <source>
        <strain>ATCC 204508 / S288c</strain>
    </source>
</reference>
<reference key="3">
    <citation type="journal article" date="2014" name="G3 (Bethesda)">
        <title>The reference genome sequence of Saccharomyces cerevisiae: Then and now.</title>
        <authorList>
            <person name="Engel S.R."/>
            <person name="Dietrich F.S."/>
            <person name="Fisk D.G."/>
            <person name="Binkley G."/>
            <person name="Balakrishnan R."/>
            <person name="Costanzo M.C."/>
            <person name="Dwight S.S."/>
            <person name="Hitz B.C."/>
            <person name="Karra K."/>
            <person name="Nash R.S."/>
            <person name="Weng S."/>
            <person name="Wong E.D."/>
            <person name="Lloyd P."/>
            <person name="Skrzypek M.S."/>
            <person name="Miyasato S.R."/>
            <person name="Simison M."/>
            <person name="Cherry J.M."/>
        </authorList>
    </citation>
    <scope>GENOME REANNOTATION</scope>
    <source>
        <strain>ATCC 204508 / S288c</strain>
    </source>
</reference>
<reference key="4">
    <citation type="journal article" date="2001" name="Genetics">
        <title>Suppressors of ssy1 and ptr3 null mutations define novel amino acid sensor-independent genes in Saccharomyces cerevisiae.</title>
        <authorList>
            <person name="Forsberg H."/>
            <person name="Hammar M."/>
            <person name="Andreasson C."/>
            <person name="Moliner A."/>
            <person name="Ljungdahl P.O."/>
        </authorList>
    </citation>
    <scope>FUNCTION</scope>
</reference>
<reference key="5">
    <citation type="journal article" date="2002" name="FEBS Lett.">
        <title>Yeast Npi3/Bro1 is involved in ubiquitin-dependent control of permease trafficking.</title>
        <authorList>
            <person name="Springael J.-Y."/>
            <person name="Nikko E."/>
            <person name="Andre B."/>
            <person name="Marini A.-M."/>
        </authorList>
    </citation>
    <scope>FUNCTION</scope>
</reference>
<reference key="6">
    <citation type="journal article" date="2003" name="J. Cell Sci.">
        <title>Bro1 is an endosome-associated protein that functions in the MVB pathway in Saccharomyces cerevisiae.</title>
        <authorList>
            <person name="Odorizzi G."/>
            <person name="Katzmann D.J."/>
            <person name="Babst M."/>
            <person name="Audhya A."/>
            <person name="Emr S.D."/>
        </authorList>
    </citation>
    <scope>FUNCTION</scope>
    <scope>SUBCELLULAR LOCATION</scope>
</reference>
<reference key="7">
    <citation type="journal article" date="2003" name="J. Biol. Chem.">
        <title>Permease recycling and ubiquitination status reveal a particular role for Bro1 in the multivesicular body pathway.</title>
        <authorList>
            <person name="Nikko E."/>
            <person name="Marini A.-M."/>
            <person name="Andre B."/>
        </authorList>
    </citation>
    <scope>FUNCTION</scope>
</reference>
<reference key="8">
    <citation type="journal article" date="2003" name="Nature">
        <title>Global analysis of protein localization in budding yeast.</title>
        <authorList>
            <person name="Huh W.-K."/>
            <person name="Falvo J.V."/>
            <person name="Gerke L.C."/>
            <person name="Carroll A.S."/>
            <person name="Howson R.W."/>
            <person name="Weissman J.S."/>
            <person name="O'Shea E.K."/>
        </authorList>
    </citation>
    <scope>SUBCELLULAR LOCATION [LARGE SCALE ANALYSIS]</scope>
</reference>
<reference key="9">
    <citation type="journal article" date="2003" name="Nature">
        <title>Global analysis of protein expression in yeast.</title>
        <authorList>
            <person name="Ghaemmaghami S."/>
            <person name="Huh W.-K."/>
            <person name="Bower K."/>
            <person name="Howson R.W."/>
            <person name="Belle A."/>
            <person name="Dephoure N."/>
            <person name="O'Shea E.K."/>
            <person name="Weissman J.S."/>
        </authorList>
    </citation>
    <scope>LEVEL OF PROTEIN EXPRESSION [LARGE SCALE ANALYSIS]</scope>
</reference>
<reference key="10">
    <citation type="journal article" date="2004" name="J. Cell Biol.">
        <title>Bro1 coordinates deubiquitination in the multivesicular body pathway by recruiting Doa4 to endosomes.</title>
        <authorList>
            <person name="Luhtala N."/>
            <person name="Odorizzi G."/>
        </authorList>
    </citation>
    <scope>FUNCTION</scope>
    <scope>SUBCELLULAR LOCATION</scope>
    <scope>INTERACTION WITH DOA4</scope>
</reference>
<reference key="11">
    <citation type="journal article" date="2004" name="Traffic">
        <title>Protein-protein interactions of ESCRT complexes in the yeast Saccharomyces cerevisiae.</title>
        <authorList>
            <person name="Bowers K."/>
            <person name="Lottridge J."/>
            <person name="Helliwell S.B."/>
            <person name="Goldthwaite L.M."/>
            <person name="Luzio J.P."/>
            <person name="Stevens T.H."/>
        </authorList>
    </citation>
    <scope>INTERACTION WITH DOA4 AND SNF7</scope>
</reference>
<reference key="12">
    <citation type="journal article" date="2008" name="Mol. Cell. Proteomics">
        <title>A multidimensional chromatography technology for in-depth phosphoproteome analysis.</title>
        <authorList>
            <person name="Albuquerque C.P."/>
            <person name="Smolka M.B."/>
            <person name="Payne S.H."/>
            <person name="Bafna V."/>
            <person name="Eng J."/>
            <person name="Zhou H."/>
        </authorList>
    </citation>
    <scope>PHOSPHORYLATION [LARGE SCALE ANALYSIS] AT SER-740</scope>
    <scope>IDENTIFICATION BY MASS SPECTROMETRY [LARGE SCALE ANALYSIS]</scope>
</reference>
<feature type="chain" id="PRO_0000218872" description="Vacuolar-sorting protein BRO1">
    <location>
        <begin position="1"/>
        <end position="844"/>
    </location>
</feature>
<feature type="domain" description="BRO1" evidence="2">
    <location>
        <begin position="4"/>
        <end position="400"/>
    </location>
</feature>
<feature type="region of interest" description="Disordered" evidence="3">
    <location>
        <begin position="703"/>
        <end position="734"/>
    </location>
</feature>
<feature type="region of interest" description="Disordered" evidence="3">
    <location>
        <begin position="763"/>
        <end position="844"/>
    </location>
</feature>
<feature type="coiled-coil region" evidence="1">
    <location>
        <begin position="547"/>
        <end position="583"/>
    </location>
</feature>
<feature type="compositionally biased region" description="Low complexity" evidence="3">
    <location>
        <begin position="781"/>
        <end position="790"/>
    </location>
</feature>
<feature type="compositionally biased region" description="Basic and acidic residues" evidence="3">
    <location>
        <begin position="812"/>
        <end position="821"/>
    </location>
</feature>
<feature type="modified residue" description="Phosphoserine" evidence="13">
    <location>
        <position position="740"/>
    </location>
</feature>
<feature type="sequence conflict" description="In Ref. 1; AAB07790." evidence="12" ref="1">
    <original>C</original>
    <variation>Y</variation>
    <location>
        <position position="359"/>
    </location>
</feature>
<feature type="helix" evidence="14">
    <location>
        <begin position="18"/>
        <end position="29"/>
    </location>
</feature>
<feature type="turn" evidence="14">
    <location>
        <begin position="32"/>
        <end position="34"/>
    </location>
</feature>
<feature type="helix" evidence="14">
    <location>
        <begin position="35"/>
        <end position="38"/>
    </location>
</feature>
<feature type="helix" evidence="14">
    <location>
        <begin position="41"/>
        <end position="53"/>
    </location>
</feature>
<feature type="helix" evidence="14">
    <location>
        <begin position="60"/>
        <end position="81"/>
    </location>
</feature>
<feature type="helix" evidence="14">
    <location>
        <begin position="82"/>
        <end position="88"/>
    </location>
</feature>
<feature type="strand" evidence="14">
    <location>
        <begin position="92"/>
        <end position="95"/>
    </location>
</feature>
<feature type="strand" evidence="14">
    <location>
        <begin position="100"/>
        <end position="102"/>
    </location>
</feature>
<feature type="strand" evidence="14">
    <location>
        <begin position="107"/>
        <end position="110"/>
    </location>
</feature>
<feature type="helix" evidence="14">
    <location>
        <begin position="113"/>
        <end position="134"/>
    </location>
</feature>
<feature type="turn" evidence="14">
    <location>
        <begin position="135"/>
        <end position="137"/>
    </location>
</feature>
<feature type="strand" evidence="14">
    <location>
        <begin position="138"/>
        <end position="140"/>
    </location>
</feature>
<feature type="helix" evidence="14">
    <location>
        <begin position="141"/>
        <end position="160"/>
    </location>
</feature>
<feature type="helix" evidence="14">
    <location>
        <begin position="167"/>
        <end position="169"/>
    </location>
</feature>
<feature type="helix" evidence="14">
    <location>
        <begin position="171"/>
        <end position="193"/>
    </location>
</feature>
<feature type="helix" evidence="14">
    <location>
        <begin position="199"/>
        <end position="201"/>
    </location>
</feature>
<feature type="helix" evidence="14">
    <location>
        <begin position="203"/>
        <end position="225"/>
    </location>
</feature>
<feature type="turn" evidence="14">
    <location>
        <begin position="230"/>
        <end position="232"/>
    </location>
</feature>
<feature type="strand" evidence="14">
    <location>
        <begin position="233"/>
        <end position="235"/>
    </location>
</feature>
<feature type="helix" evidence="14">
    <location>
        <begin position="239"/>
        <end position="264"/>
    </location>
</feature>
<feature type="helix" evidence="14">
    <location>
        <begin position="270"/>
        <end position="285"/>
    </location>
</feature>
<feature type="helix" evidence="14">
    <location>
        <begin position="286"/>
        <end position="288"/>
    </location>
</feature>
<feature type="turn" evidence="14">
    <location>
        <begin position="290"/>
        <end position="295"/>
    </location>
</feature>
<feature type="helix" evidence="14">
    <location>
        <begin position="298"/>
        <end position="317"/>
    </location>
</feature>
<feature type="strand" evidence="14">
    <location>
        <begin position="318"/>
        <end position="320"/>
    </location>
</feature>
<feature type="helix" evidence="14">
    <location>
        <begin position="330"/>
        <end position="332"/>
    </location>
</feature>
<feature type="helix" evidence="14">
    <location>
        <begin position="344"/>
        <end position="366"/>
    </location>
</feature>
<protein>
    <recommendedName>
        <fullName>Vacuolar-sorting protein BRO1</fullName>
    </recommendedName>
    <alternativeName>
        <fullName>Amino acid sensor-independent protein 6</fullName>
    </alternativeName>
    <alternativeName>
        <fullName>BCK1-like resistance to osmotic shock protein 1</fullName>
    </alternativeName>
    <alternativeName>
        <fullName>BRO domain-containing protein 1</fullName>
    </alternativeName>
    <alternativeName>
        <fullName>Nitrogen permease inactivating protein 3</fullName>
    </alternativeName>
    <alternativeName>
        <fullName>Vacuolar protein-sorting-associated protein 31</fullName>
    </alternativeName>
</protein>
<proteinExistence type="evidence at protein level"/>
<gene>
    <name type="primary">BRO1</name>
    <name type="synonym">ASI6</name>
    <name type="synonym">LPF2</name>
    <name type="synonym">NPI3</name>
    <name type="synonym">VPS31</name>
    <name type="ordered locus">YPL084W</name>
</gene>